<comment type="function">
    <text evidence="1">Necessary for efficient RNA polymerase transcription elongation past template-encoded arresting sites. The arresting sites in DNA have the property of trapping a certain fraction of elongating RNA polymerases that pass through, resulting in locked ternary complexes. Cleavage of the nascent transcript by cleavage factors such as GreA or GreB allows the resumption of elongation from the new 3'terminus. GreA releases sequences of 2 to 3 nucleotides.</text>
</comment>
<comment type="similarity">
    <text evidence="1">Belongs to the GreA/GreB family.</text>
</comment>
<protein>
    <recommendedName>
        <fullName evidence="1">Transcription elongation factor GreA</fullName>
    </recommendedName>
    <alternativeName>
        <fullName evidence="1">Transcript cleavage factor GreA</fullName>
    </alternativeName>
</protein>
<reference key="1">
    <citation type="journal article" date="2006" name="Genome Biol.">
        <title>The genome of Rhizobium leguminosarum has recognizable core and accessory components.</title>
        <authorList>
            <person name="Young J.P.W."/>
            <person name="Crossman L.C."/>
            <person name="Johnston A.W.B."/>
            <person name="Thomson N.R."/>
            <person name="Ghazoui Z.F."/>
            <person name="Hull K.H."/>
            <person name="Wexler M."/>
            <person name="Curson A.R.J."/>
            <person name="Todd J.D."/>
            <person name="Poole P.S."/>
            <person name="Mauchline T.H."/>
            <person name="East A.K."/>
            <person name="Quail M.A."/>
            <person name="Churcher C."/>
            <person name="Arrowsmith C."/>
            <person name="Cherevach I."/>
            <person name="Chillingworth T."/>
            <person name="Clarke K."/>
            <person name="Cronin A."/>
            <person name="Davis P."/>
            <person name="Fraser A."/>
            <person name="Hance Z."/>
            <person name="Hauser H."/>
            <person name="Jagels K."/>
            <person name="Moule S."/>
            <person name="Mungall K."/>
            <person name="Norbertczak H."/>
            <person name="Rabbinowitsch E."/>
            <person name="Sanders M."/>
            <person name="Simmonds M."/>
            <person name="Whitehead S."/>
            <person name="Parkhill J."/>
        </authorList>
    </citation>
    <scope>NUCLEOTIDE SEQUENCE [LARGE SCALE GENOMIC DNA]</scope>
    <source>
        <strain>DSM 114642 / LMG 32736 / 3841</strain>
    </source>
</reference>
<sequence length="158" mass="17445">MVEKVPMTPGGFVKLQEELRWRQQEERPRIIEAIAEARAHGDLSENAEYHAAKEAQSHNEGRISELEDLTARAEVIDLTKMSGDKIKFGAKVKLIDEDTEEEKTYQIVGDQEADVKAGRISISSPIARALIGKEVGDSIEVNAPGGSKAYEILQVSWG</sequence>
<gene>
    <name evidence="1" type="primary">greA</name>
    <name type="ordered locus">RL3422</name>
</gene>
<evidence type="ECO:0000255" key="1">
    <source>
        <dbReference type="HAMAP-Rule" id="MF_00105"/>
    </source>
</evidence>
<keyword id="KW-0238">DNA-binding</keyword>
<keyword id="KW-0804">Transcription</keyword>
<keyword id="KW-0805">Transcription regulation</keyword>
<accession>Q1MDR7</accession>
<feature type="chain" id="PRO_1000075887" description="Transcription elongation factor GreA">
    <location>
        <begin position="1"/>
        <end position="158"/>
    </location>
</feature>
<proteinExistence type="inferred from homology"/>
<name>GREA_RHIJ3</name>
<dbReference type="EMBL" id="AM236080">
    <property type="protein sequence ID" value="CAK08910.1"/>
    <property type="molecule type" value="Genomic_DNA"/>
</dbReference>
<dbReference type="RefSeq" id="WP_003541639.1">
    <property type="nucleotide sequence ID" value="NC_008380.1"/>
</dbReference>
<dbReference type="SMR" id="Q1MDR7"/>
<dbReference type="EnsemblBacteria" id="CAK08910">
    <property type="protein sequence ID" value="CAK08910"/>
    <property type="gene ID" value="RL3422"/>
</dbReference>
<dbReference type="GeneID" id="61424920"/>
<dbReference type="KEGG" id="rle:RL3422"/>
<dbReference type="eggNOG" id="COG0782">
    <property type="taxonomic scope" value="Bacteria"/>
</dbReference>
<dbReference type="HOGENOM" id="CLU_101379_2_0_5"/>
<dbReference type="Proteomes" id="UP000006575">
    <property type="component" value="Chromosome"/>
</dbReference>
<dbReference type="GO" id="GO:0003677">
    <property type="term" value="F:DNA binding"/>
    <property type="evidence" value="ECO:0007669"/>
    <property type="project" value="UniProtKB-UniRule"/>
</dbReference>
<dbReference type="GO" id="GO:0070063">
    <property type="term" value="F:RNA polymerase binding"/>
    <property type="evidence" value="ECO:0007669"/>
    <property type="project" value="InterPro"/>
</dbReference>
<dbReference type="GO" id="GO:0006354">
    <property type="term" value="P:DNA-templated transcription elongation"/>
    <property type="evidence" value="ECO:0007669"/>
    <property type="project" value="TreeGrafter"/>
</dbReference>
<dbReference type="GO" id="GO:0032784">
    <property type="term" value="P:regulation of DNA-templated transcription elongation"/>
    <property type="evidence" value="ECO:0007669"/>
    <property type="project" value="UniProtKB-UniRule"/>
</dbReference>
<dbReference type="FunFam" id="1.10.287.180:FF:000001">
    <property type="entry name" value="Transcription elongation factor GreA"/>
    <property type="match status" value="1"/>
</dbReference>
<dbReference type="FunFam" id="3.10.50.30:FF:000001">
    <property type="entry name" value="Transcription elongation factor GreA"/>
    <property type="match status" value="1"/>
</dbReference>
<dbReference type="Gene3D" id="3.10.50.30">
    <property type="entry name" value="Transcription elongation factor, GreA/GreB, C-terminal domain"/>
    <property type="match status" value="1"/>
</dbReference>
<dbReference type="Gene3D" id="1.10.287.180">
    <property type="entry name" value="Transcription elongation factor, GreA/GreB, N-terminal domain"/>
    <property type="match status" value="1"/>
</dbReference>
<dbReference type="HAMAP" id="MF_00105">
    <property type="entry name" value="GreA_GreB"/>
    <property type="match status" value="1"/>
</dbReference>
<dbReference type="InterPro" id="IPR036953">
    <property type="entry name" value="GreA/GreB_C_sf"/>
</dbReference>
<dbReference type="InterPro" id="IPR018151">
    <property type="entry name" value="TF_GreA/GreB_CS"/>
</dbReference>
<dbReference type="InterPro" id="IPR006359">
    <property type="entry name" value="Tscrpt_elong_fac_GreA"/>
</dbReference>
<dbReference type="InterPro" id="IPR028624">
    <property type="entry name" value="Tscrpt_elong_fac_GreA/B"/>
</dbReference>
<dbReference type="InterPro" id="IPR001437">
    <property type="entry name" value="Tscrpt_elong_fac_GreA/B_C"/>
</dbReference>
<dbReference type="InterPro" id="IPR023459">
    <property type="entry name" value="Tscrpt_elong_fac_GreA/B_fam"/>
</dbReference>
<dbReference type="InterPro" id="IPR022691">
    <property type="entry name" value="Tscrpt_elong_fac_GreA/B_N"/>
</dbReference>
<dbReference type="InterPro" id="IPR036805">
    <property type="entry name" value="Tscrpt_elong_fac_GreA/B_N_sf"/>
</dbReference>
<dbReference type="NCBIfam" id="TIGR01462">
    <property type="entry name" value="greA"/>
    <property type="match status" value="1"/>
</dbReference>
<dbReference type="NCBIfam" id="NF001261">
    <property type="entry name" value="PRK00226.1-2"/>
    <property type="match status" value="1"/>
</dbReference>
<dbReference type="NCBIfam" id="NF001263">
    <property type="entry name" value="PRK00226.1-4"/>
    <property type="match status" value="1"/>
</dbReference>
<dbReference type="NCBIfam" id="NF001264">
    <property type="entry name" value="PRK00226.1-5"/>
    <property type="match status" value="1"/>
</dbReference>
<dbReference type="PANTHER" id="PTHR30437">
    <property type="entry name" value="TRANSCRIPTION ELONGATION FACTOR GREA"/>
    <property type="match status" value="1"/>
</dbReference>
<dbReference type="PANTHER" id="PTHR30437:SF4">
    <property type="entry name" value="TRANSCRIPTION ELONGATION FACTOR GREA"/>
    <property type="match status" value="1"/>
</dbReference>
<dbReference type="Pfam" id="PF01272">
    <property type="entry name" value="GreA_GreB"/>
    <property type="match status" value="1"/>
</dbReference>
<dbReference type="Pfam" id="PF03449">
    <property type="entry name" value="GreA_GreB_N"/>
    <property type="match status" value="1"/>
</dbReference>
<dbReference type="PIRSF" id="PIRSF006092">
    <property type="entry name" value="GreA_GreB"/>
    <property type="match status" value="1"/>
</dbReference>
<dbReference type="SUPFAM" id="SSF54534">
    <property type="entry name" value="FKBP-like"/>
    <property type="match status" value="1"/>
</dbReference>
<dbReference type="SUPFAM" id="SSF46557">
    <property type="entry name" value="GreA transcript cleavage protein, N-terminal domain"/>
    <property type="match status" value="1"/>
</dbReference>
<dbReference type="PROSITE" id="PS00829">
    <property type="entry name" value="GREAB_1"/>
    <property type="match status" value="1"/>
</dbReference>
<dbReference type="PROSITE" id="PS00830">
    <property type="entry name" value="GREAB_2"/>
    <property type="match status" value="1"/>
</dbReference>
<organism>
    <name type="scientific">Rhizobium johnstonii (strain DSM 114642 / LMG 32736 / 3841)</name>
    <name type="common">Rhizobium leguminosarum bv. viciae</name>
    <dbReference type="NCBI Taxonomy" id="216596"/>
    <lineage>
        <taxon>Bacteria</taxon>
        <taxon>Pseudomonadati</taxon>
        <taxon>Pseudomonadota</taxon>
        <taxon>Alphaproteobacteria</taxon>
        <taxon>Hyphomicrobiales</taxon>
        <taxon>Rhizobiaceae</taxon>
        <taxon>Rhizobium/Agrobacterium group</taxon>
        <taxon>Rhizobium</taxon>
        <taxon>Rhizobium johnstonii</taxon>
    </lineage>
</organism>